<name>RF1_STRGG</name>
<reference key="1">
    <citation type="journal article" date="2008" name="J. Bacteriol.">
        <title>Genome sequence of the streptomycin-producing microorganism Streptomyces griseus IFO 13350.</title>
        <authorList>
            <person name="Ohnishi Y."/>
            <person name="Ishikawa J."/>
            <person name="Hara H."/>
            <person name="Suzuki H."/>
            <person name="Ikenoya M."/>
            <person name="Ikeda H."/>
            <person name="Yamashita A."/>
            <person name="Hattori M."/>
            <person name="Horinouchi S."/>
        </authorList>
    </citation>
    <scope>NUCLEOTIDE SEQUENCE [LARGE SCALE GENOMIC DNA]</scope>
    <source>
        <strain>JCM 4626 / CBS 651.72 / NBRC 13350 / KCC S-0626 / ISP 5235</strain>
    </source>
</reference>
<protein>
    <recommendedName>
        <fullName evidence="1">Peptide chain release factor 1</fullName>
        <shortName evidence="1">RF-1</shortName>
    </recommendedName>
</protein>
<sequence length="358" mass="39472">MFEAVEELIGEHTGLEKKLADPSVHADQANARKLNKRYAELTPIVSTYRAWKQTGEDIETAREFAADDPDFAAEVKELEKQREEITEKLRLLLVPRDPSDDKDVLLEIKAGAGGDESALFAGDLLRMYLRYAERVGWKTEIIDSTESELGGYKDVQVAVKTKGGNGATEPGQGVWARMKYEGGVHRVQRVPSTESQGRIHTSAAGVLVTPEAEEVDVEIHANDLRIDVYRSSGPGGQSVNTTDSAVRITHLPTGVVASCQNEKSQLQNKEQAMRILRSRLLAAAQEAAEQEASDVRRSQVRTVDRSEKIRTYNFPENRISDHRVGFKAYNLDQVLDGELDAVIQACVDADSAAKLANA</sequence>
<evidence type="ECO:0000255" key="1">
    <source>
        <dbReference type="HAMAP-Rule" id="MF_00093"/>
    </source>
</evidence>
<proteinExistence type="inferred from homology"/>
<gene>
    <name evidence="1" type="primary">prfA</name>
    <name type="ordered locus">SGR_2176</name>
</gene>
<accession>B1W0B6</accession>
<dbReference type="EMBL" id="AP009493">
    <property type="protein sequence ID" value="BAG19005.1"/>
    <property type="molecule type" value="Genomic_DNA"/>
</dbReference>
<dbReference type="RefSeq" id="WP_003966262.1">
    <property type="nucleotide sequence ID" value="NC_010572.1"/>
</dbReference>
<dbReference type="SMR" id="B1W0B6"/>
<dbReference type="KEGG" id="sgr:SGR_2176"/>
<dbReference type="eggNOG" id="COG0216">
    <property type="taxonomic scope" value="Bacteria"/>
</dbReference>
<dbReference type="HOGENOM" id="CLU_036856_0_1_11"/>
<dbReference type="Proteomes" id="UP000001685">
    <property type="component" value="Chromosome"/>
</dbReference>
<dbReference type="GO" id="GO:0005737">
    <property type="term" value="C:cytoplasm"/>
    <property type="evidence" value="ECO:0007669"/>
    <property type="project" value="UniProtKB-SubCell"/>
</dbReference>
<dbReference type="GO" id="GO:0016149">
    <property type="term" value="F:translation release factor activity, codon specific"/>
    <property type="evidence" value="ECO:0007669"/>
    <property type="project" value="UniProtKB-UniRule"/>
</dbReference>
<dbReference type="FunFam" id="3.30.160.20:FF:000004">
    <property type="entry name" value="Peptide chain release factor 1"/>
    <property type="match status" value="1"/>
</dbReference>
<dbReference type="FunFam" id="3.30.70.1660:FF:000002">
    <property type="entry name" value="Peptide chain release factor 1"/>
    <property type="match status" value="1"/>
</dbReference>
<dbReference type="Gene3D" id="3.30.160.20">
    <property type="match status" value="1"/>
</dbReference>
<dbReference type="Gene3D" id="3.30.70.1660">
    <property type="match status" value="1"/>
</dbReference>
<dbReference type="Gene3D" id="6.10.140.1950">
    <property type="match status" value="1"/>
</dbReference>
<dbReference type="HAMAP" id="MF_00093">
    <property type="entry name" value="Rel_fac_1"/>
    <property type="match status" value="1"/>
</dbReference>
<dbReference type="InterPro" id="IPR005139">
    <property type="entry name" value="PCRF"/>
</dbReference>
<dbReference type="InterPro" id="IPR000352">
    <property type="entry name" value="Pep_chain_release_fac_I"/>
</dbReference>
<dbReference type="InterPro" id="IPR045853">
    <property type="entry name" value="Pep_chain_release_fac_I_sf"/>
</dbReference>
<dbReference type="InterPro" id="IPR050057">
    <property type="entry name" value="Prokaryotic/Mito_RF"/>
</dbReference>
<dbReference type="InterPro" id="IPR004373">
    <property type="entry name" value="RF-1"/>
</dbReference>
<dbReference type="NCBIfam" id="TIGR00019">
    <property type="entry name" value="prfA"/>
    <property type="match status" value="1"/>
</dbReference>
<dbReference type="NCBIfam" id="NF001859">
    <property type="entry name" value="PRK00591.1"/>
    <property type="match status" value="1"/>
</dbReference>
<dbReference type="PANTHER" id="PTHR43804">
    <property type="entry name" value="LD18447P"/>
    <property type="match status" value="1"/>
</dbReference>
<dbReference type="PANTHER" id="PTHR43804:SF7">
    <property type="entry name" value="LD18447P"/>
    <property type="match status" value="1"/>
</dbReference>
<dbReference type="Pfam" id="PF03462">
    <property type="entry name" value="PCRF"/>
    <property type="match status" value="1"/>
</dbReference>
<dbReference type="Pfam" id="PF00472">
    <property type="entry name" value="RF-1"/>
    <property type="match status" value="1"/>
</dbReference>
<dbReference type="SMART" id="SM00937">
    <property type="entry name" value="PCRF"/>
    <property type="match status" value="1"/>
</dbReference>
<dbReference type="SUPFAM" id="SSF75620">
    <property type="entry name" value="Release factor"/>
    <property type="match status" value="1"/>
</dbReference>
<dbReference type="PROSITE" id="PS00745">
    <property type="entry name" value="RF_PROK_I"/>
    <property type="match status" value="1"/>
</dbReference>
<keyword id="KW-0963">Cytoplasm</keyword>
<keyword id="KW-0488">Methylation</keyword>
<keyword id="KW-0648">Protein biosynthesis</keyword>
<comment type="function">
    <text evidence="1">Peptide chain release factor 1 directs the termination of translation in response to the peptide chain termination codons UAG and UAA.</text>
</comment>
<comment type="subcellular location">
    <subcellularLocation>
        <location evidence="1">Cytoplasm</location>
    </subcellularLocation>
</comment>
<comment type="PTM">
    <text evidence="1">Methylated by PrmC. Methylation increases the termination efficiency of RF1.</text>
</comment>
<comment type="similarity">
    <text evidence="1">Belongs to the prokaryotic/mitochondrial release factor family.</text>
</comment>
<organism>
    <name type="scientific">Streptomyces griseus subsp. griseus (strain JCM 4626 / CBS 651.72 / NBRC 13350 / KCC S-0626 / ISP 5235)</name>
    <dbReference type="NCBI Taxonomy" id="455632"/>
    <lineage>
        <taxon>Bacteria</taxon>
        <taxon>Bacillati</taxon>
        <taxon>Actinomycetota</taxon>
        <taxon>Actinomycetes</taxon>
        <taxon>Kitasatosporales</taxon>
        <taxon>Streptomycetaceae</taxon>
        <taxon>Streptomyces</taxon>
    </lineage>
</organism>
<feature type="chain" id="PRO_1000093508" description="Peptide chain release factor 1">
    <location>
        <begin position="1"/>
        <end position="358"/>
    </location>
</feature>
<feature type="modified residue" description="N5-methylglutamine" evidence="1">
    <location>
        <position position="237"/>
    </location>
</feature>